<dbReference type="EC" id="6.1.1.20" evidence="1"/>
<dbReference type="EMBL" id="AM260525">
    <property type="protein sequence ID" value="CAK00590.1"/>
    <property type="molecule type" value="Genomic_DNA"/>
</dbReference>
<dbReference type="RefSeq" id="WP_012230419.1">
    <property type="nucleotide sequence ID" value="NC_010161.1"/>
</dbReference>
<dbReference type="SMR" id="A9ILQ3"/>
<dbReference type="KEGG" id="btr:BT_0097"/>
<dbReference type="eggNOG" id="COG0016">
    <property type="taxonomic scope" value="Bacteria"/>
</dbReference>
<dbReference type="HOGENOM" id="CLU_025086_0_1_5"/>
<dbReference type="Proteomes" id="UP000001592">
    <property type="component" value="Chromosome"/>
</dbReference>
<dbReference type="GO" id="GO:0005737">
    <property type="term" value="C:cytoplasm"/>
    <property type="evidence" value="ECO:0007669"/>
    <property type="project" value="UniProtKB-SubCell"/>
</dbReference>
<dbReference type="GO" id="GO:0005524">
    <property type="term" value="F:ATP binding"/>
    <property type="evidence" value="ECO:0007669"/>
    <property type="project" value="UniProtKB-UniRule"/>
</dbReference>
<dbReference type="GO" id="GO:0000287">
    <property type="term" value="F:magnesium ion binding"/>
    <property type="evidence" value="ECO:0007669"/>
    <property type="project" value="UniProtKB-UniRule"/>
</dbReference>
<dbReference type="GO" id="GO:0004826">
    <property type="term" value="F:phenylalanine-tRNA ligase activity"/>
    <property type="evidence" value="ECO:0007669"/>
    <property type="project" value="UniProtKB-UniRule"/>
</dbReference>
<dbReference type="GO" id="GO:0000049">
    <property type="term" value="F:tRNA binding"/>
    <property type="evidence" value="ECO:0007669"/>
    <property type="project" value="InterPro"/>
</dbReference>
<dbReference type="GO" id="GO:0006432">
    <property type="term" value="P:phenylalanyl-tRNA aminoacylation"/>
    <property type="evidence" value="ECO:0007669"/>
    <property type="project" value="UniProtKB-UniRule"/>
</dbReference>
<dbReference type="CDD" id="cd00496">
    <property type="entry name" value="PheRS_alpha_core"/>
    <property type="match status" value="1"/>
</dbReference>
<dbReference type="FunFam" id="3.30.930.10:FF:000003">
    <property type="entry name" value="Phenylalanine--tRNA ligase alpha subunit"/>
    <property type="match status" value="1"/>
</dbReference>
<dbReference type="Gene3D" id="3.30.930.10">
    <property type="entry name" value="Bira Bifunctional Protein, Domain 2"/>
    <property type="match status" value="1"/>
</dbReference>
<dbReference type="HAMAP" id="MF_00281">
    <property type="entry name" value="Phe_tRNA_synth_alpha1"/>
    <property type="match status" value="1"/>
</dbReference>
<dbReference type="InterPro" id="IPR006195">
    <property type="entry name" value="aa-tRNA-synth_II"/>
</dbReference>
<dbReference type="InterPro" id="IPR045864">
    <property type="entry name" value="aa-tRNA-synth_II/BPL/LPL"/>
</dbReference>
<dbReference type="InterPro" id="IPR004529">
    <property type="entry name" value="Phe-tRNA-synth_IIc_asu"/>
</dbReference>
<dbReference type="InterPro" id="IPR004188">
    <property type="entry name" value="Phe-tRNA_ligase_II_N"/>
</dbReference>
<dbReference type="InterPro" id="IPR022911">
    <property type="entry name" value="Phe_tRNA_ligase_alpha1_bac"/>
</dbReference>
<dbReference type="InterPro" id="IPR002319">
    <property type="entry name" value="Phenylalanyl-tRNA_Synthase"/>
</dbReference>
<dbReference type="InterPro" id="IPR010978">
    <property type="entry name" value="tRNA-bd_arm"/>
</dbReference>
<dbReference type="NCBIfam" id="TIGR00468">
    <property type="entry name" value="pheS"/>
    <property type="match status" value="1"/>
</dbReference>
<dbReference type="PANTHER" id="PTHR11538:SF41">
    <property type="entry name" value="PHENYLALANINE--TRNA LIGASE, MITOCHONDRIAL"/>
    <property type="match status" value="1"/>
</dbReference>
<dbReference type="PANTHER" id="PTHR11538">
    <property type="entry name" value="PHENYLALANYL-TRNA SYNTHETASE"/>
    <property type="match status" value="1"/>
</dbReference>
<dbReference type="Pfam" id="PF02912">
    <property type="entry name" value="Phe_tRNA-synt_N"/>
    <property type="match status" value="1"/>
</dbReference>
<dbReference type="Pfam" id="PF01409">
    <property type="entry name" value="tRNA-synt_2d"/>
    <property type="match status" value="1"/>
</dbReference>
<dbReference type="SUPFAM" id="SSF55681">
    <property type="entry name" value="Class II aaRS and biotin synthetases"/>
    <property type="match status" value="1"/>
</dbReference>
<dbReference type="SUPFAM" id="SSF46589">
    <property type="entry name" value="tRNA-binding arm"/>
    <property type="match status" value="1"/>
</dbReference>
<dbReference type="PROSITE" id="PS50862">
    <property type="entry name" value="AA_TRNA_LIGASE_II"/>
    <property type="match status" value="1"/>
</dbReference>
<organism>
    <name type="scientific">Bartonella tribocorum (strain CIP 105476 / IBS 506)</name>
    <dbReference type="NCBI Taxonomy" id="382640"/>
    <lineage>
        <taxon>Bacteria</taxon>
        <taxon>Pseudomonadati</taxon>
        <taxon>Pseudomonadota</taxon>
        <taxon>Alphaproteobacteria</taxon>
        <taxon>Hyphomicrobiales</taxon>
        <taxon>Bartonellaceae</taxon>
        <taxon>Bartonella</taxon>
    </lineage>
</organism>
<gene>
    <name evidence="1" type="primary">pheS</name>
    <name type="ordered locus">BT_0097</name>
</gene>
<reference key="1">
    <citation type="journal article" date="2007" name="Nat. Genet.">
        <title>Genomic analysis of Bartonella identifies type IV secretion systems as host adaptability factors.</title>
        <authorList>
            <person name="Saenz H.L."/>
            <person name="Engel P."/>
            <person name="Stoeckli M.C."/>
            <person name="Lanz C."/>
            <person name="Raddatz G."/>
            <person name="Vayssier-Taussat M."/>
            <person name="Birtles R."/>
            <person name="Schuster S.C."/>
            <person name="Dehio C."/>
        </authorList>
    </citation>
    <scope>NUCLEOTIDE SEQUENCE [LARGE SCALE GENOMIC DNA]</scope>
    <source>
        <strain>CIP 105476 / IBS 506</strain>
    </source>
</reference>
<feature type="chain" id="PRO_1000078826" description="Phenylalanine--tRNA ligase alpha subunit">
    <location>
        <begin position="1"/>
        <end position="360"/>
    </location>
</feature>
<feature type="binding site" evidence="1">
    <location>
        <position position="260"/>
    </location>
    <ligand>
        <name>Mg(2+)</name>
        <dbReference type="ChEBI" id="CHEBI:18420"/>
        <note>shared with beta subunit</note>
    </ligand>
</feature>
<sequence length="360" mass="41295">MSDIERLEQEICLALEAANDEQALEAVRIAALGKKGSISEKLKALGKMEASERQKAGPVLNGLKNRILELWAQKRDLLKRQAMDTRLSRETVDITLPVRSSPMERGRIHPISQVIEEIIAIYTKMGFSLAEGPDIETDYYNFTALNFPEGHPAREMHDTFFFDVDKIGERKLLRTHTSPVQIRTLEKQKAPIRIIIPGKTYRMDSDATHSPMFHQVEGLVIDKTSTIAHMMWLHETFCKEFFEVASVKMRFRPSFFPFTEPSMEVDIQCDRSGSEVKFGEGQDWLEILGCGMVHPHVLKNVGLDPDEYQGFAWGMGIDRIAMLKYGMPDLRAFFDADLRWLDHYGFRCFDMPAFFPNRNV</sequence>
<comment type="catalytic activity">
    <reaction evidence="1">
        <text>tRNA(Phe) + L-phenylalanine + ATP = L-phenylalanyl-tRNA(Phe) + AMP + diphosphate + H(+)</text>
        <dbReference type="Rhea" id="RHEA:19413"/>
        <dbReference type="Rhea" id="RHEA-COMP:9668"/>
        <dbReference type="Rhea" id="RHEA-COMP:9699"/>
        <dbReference type="ChEBI" id="CHEBI:15378"/>
        <dbReference type="ChEBI" id="CHEBI:30616"/>
        <dbReference type="ChEBI" id="CHEBI:33019"/>
        <dbReference type="ChEBI" id="CHEBI:58095"/>
        <dbReference type="ChEBI" id="CHEBI:78442"/>
        <dbReference type="ChEBI" id="CHEBI:78531"/>
        <dbReference type="ChEBI" id="CHEBI:456215"/>
        <dbReference type="EC" id="6.1.1.20"/>
    </reaction>
</comment>
<comment type="cofactor">
    <cofactor evidence="1">
        <name>Mg(2+)</name>
        <dbReference type="ChEBI" id="CHEBI:18420"/>
    </cofactor>
    <text evidence="1">Binds 2 magnesium ions per tetramer.</text>
</comment>
<comment type="subunit">
    <text evidence="1">Tetramer of two alpha and two beta subunits.</text>
</comment>
<comment type="subcellular location">
    <subcellularLocation>
        <location evidence="1">Cytoplasm</location>
    </subcellularLocation>
</comment>
<comment type="similarity">
    <text evidence="1">Belongs to the class-II aminoacyl-tRNA synthetase family. Phe-tRNA synthetase alpha subunit type 1 subfamily.</text>
</comment>
<name>SYFA_BART1</name>
<proteinExistence type="inferred from homology"/>
<protein>
    <recommendedName>
        <fullName evidence="1">Phenylalanine--tRNA ligase alpha subunit</fullName>
        <ecNumber evidence="1">6.1.1.20</ecNumber>
    </recommendedName>
    <alternativeName>
        <fullName evidence="1">Phenylalanyl-tRNA synthetase alpha subunit</fullName>
        <shortName evidence="1">PheRS</shortName>
    </alternativeName>
</protein>
<evidence type="ECO:0000255" key="1">
    <source>
        <dbReference type="HAMAP-Rule" id="MF_00281"/>
    </source>
</evidence>
<accession>A9ILQ3</accession>
<keyword id="KW-0030">Aminoacyl-tRNA synthetase</keyword>
<keyword id="KW-0067">ATP-binding</keyword>
<keyword id="KW-0963">Cytoplasm</keyword>
<keyword id="KW-0436">Ligase</keyword>
<keyword id="KW-0460">Magnesium</keyword>
<keyword id="KW-0479">Metal-binding</keyword>
<keyword id="KW-0547">Nucleotide-binding</keyword>
<keyword id="KW-0648">Protein biosynthesis</keyword>